<reference key="1">
    <citation type="journal article" date="2006" name="Proc. Natl. Acad. Sci. U.S.A.">
        <title>Multireplicon genome architecture of Lactobacillus salivarius.</title>
        <authorList>
            <person name="Claesson M.J."/>
            <person name="Li Y."/>
            <person name="Leahy S."/>
            <person name="Canchaya C."/>
            <person name="van Pijkeren J.P."/>
            <person name="Cerdeno-Tarraga A.M."/>
            <person name="Parkhill J."/>
            <person name="Flynn S."/>
            <person name="O'Sullivan G.C."/>
            <person name="Collins J.K."/>
            <person name="Higgins D."/>
            <person name="Shanahan F."/>
            <person name="Fitzgerald G.F."/>
            <person name="van Sinderen D."/>
            <person name="O'Toole P.W."/>
        </authorList>
    </citation>
    <scope>NUCLEOTIDE SEQUENCE [LARGE SCALE GENOMIC DNA]</scope>
    <source>
        <strain>UCC118</strain>
    </source>
</reference>
<protein>
    <recommendedName>
        <fullName evidence="1">Glutamate 5-kinase</fullName>
        <ecNumber evidence="1">2.7.2.11</ecNumber>
    </recommendedName>
    <alternativeName>
        <fullName evidence="1">Gamma-glutamyl kinase</fullName>
        <shortName evidence="1">GK</shortName>
    </alternativeName>
</protein>
<comment type="function">
    <text evidence="1">Catalyzes the transfer of a phosphate group to glutamate to form L-glutamate 5-phosphate.</text>
</comment>
<comment type="catalytic activity">
    <reaction evidence="1">
        <text>L-glutamate + ATP = L-glutamyl 5-phosphate + ADP</text>
        <dbReference type="Rhea" id="RHEA:14877"/>
        <dbReference type="ChEBI" id="CHEBI:29985"/>
        <dbReference type="ChEBI" id="CHEBI:30616"/>
        <dbReference type="ChEBI" id="CHEBI:58274"/>
        <dbReference type="ChEBI" id="CHEBI:456216"/>
        <dbReference type="EC" id="2.7.2.11"/>
    </reaction>
</comment>
<comment type="pathway">
    <text evidence="1">Amino-acid biosynthesis; L-proline biosynthesis; L-glutamate 5-semialdehyde from L-glutamate: step 1/2.</text>
</comment>
<comment type="subcellular location">
    <subcellularLocation>
        <location evidence="1">Cytoplasm</location>
    </subcellularLocation>
</comment>
<comment type="similarity">
    <text evidence="1">Belongs to the glutamate 5-kinase family.</text>
</comment>
<organism>
    <name type="scientific">Ligilactobacillus salivarius (strain UCC118)</name>
    <name type="common">Lactobacillus salivarius</name>
    <dbReference type="NCBI Taxonomy" id="362948"/>
    <lineage>
        <taxon>Bacteria</taxon>
        <taxon>Bacillati</taxon>
        <taxon>Bacillota</taxon>
        <taxon>Bacilli</taxon>
        <taxon>Lactobacillales</taxon>
        <taxon>Lactobacillaceae</taxon>
        <taxon>Ligilactobacillus</taxon>
    </lineage>
</organism>
<gene>
    <name evidence="1" type="primary">proB</name>
    <name type="ordered locus">LSL_1612</name>
</gene>
<evidence type="ECO:0000255" key="1">
    <source>
        <dbReference type="HAMAP-Rule" id="MF_00456"/>
    </source>
</evidence>
<feature type="chain" id="PRO_0000252983" description="Glutamate 5-kinase">
    <location>
        <begin position="1"/>
        <end position="267"/>
    </location>
</feature>
<feature type="binding site" evidence="1">
    <location>
        <position position="15"/>
    </location>
    <ligand>
        <name>ATP</name>
        <dbReference type="ChEBI" id="CHEBI:30616"/>
    </ligand>
</feature>
<feature type="binding site" evidence="1">
    <location>
        <position position="55"/>
    </location>
    <ligand>
        <name>substrate</name>
    </ligand>
</feature>
<feature type="binding site" evidence="1">
    <location>
        <position position="142"/>
    </location>
    <ligand>
        <name>substrate</name>
    </ligand>
</feature>
<feature type="binding site" evidence="1">
    <location>
        <position position="158"/>
    </location>
    <ligand>
        <name>substrate</name>
    </ligand>
</feature>
<feature type="binding site" evidence="1">
    <location>
        <begin position="178"/>
        <end position="179"/>
    </location>
    <ligand>
        <name>ATP</name>
        <dbReference type="ChEBI" id="CHEBI:30616"/>
    </ligand>
</feature>
<feature type="binding site" evidence="1">
    <location>
        <begin position="220"/>
        <end position="226"/>
    </location>
    <ligand>
        <name>ATP</name>
        <dbReference type="ChEBI" id="CHEBI:30616"/>
    </ligand>
</feature>
<dbReference type="EC" id="2.7.2.11" evidence="1"/>
<dbReference type="EMBL" id="CP000233">
    <property type="protein sequence ID" value="ABE00414.1"/>
    <property type="molecule type" value="Genomic_DNA"/>
</dbReference>
<dbReference type="RefSeq" id="WP_011476469.1">
    <property type="nucleotide sequence ID" value="NC_007929.1"/>
</dbReference>
<dbReference type="RefSeq" id="YP_536497.1">
    <property type="nucleotide sequence ID" value="NC_007929.1"/>
</dbReference>
<dbReference type="SMR" id="Q1WRR5"/>
<dbReference type="STRING" id="362948.LSL_1612"/>
<dbReference type="KEGG" id="lsl:LSL_1612"/>
<dbReference type="PATRIC" id="fig|362948.14.peg.1707"/>
<dbReference type="HOGENOM" id="CLU_025400_0_2_9"/>
<dbReference type="OrthoDB" id="9804434at2"/>
<dbReference type="UniPathway" id="UPA00098">
    <property type="reaction ID" value="UER00359"/>
</dbReference>
<dbReference type="Proteomes" id="UP000006559">
    <property type="component" value="Chromosome"/>
</dbReference>
<dbReference type="GO" id="GO:0005829">
    <property type="term" value="C:cytosol"/>
    <property type="evidence" value="ECO:0007669"/>
    <property type="project" value="TreeGrafter"/>
</dbReference>
<dbReference type="GO" id="GO:0005524">
    <property type="term" value="F:ATP binding"/>
    <property type="evidence" value="ECO:0007669"/>
    <property type="project" value="UniProtKB-KW"/>
</dbReference>
<dbReference type="GO" id="GO:0004349">
    <property type="term" value="F:glutamate 5-kinase activity"/>
    <property type="evidence" value="ECO:0007669"/>
    <property type="project" value="UniProtKB-UniRule"/>
</dbReference>
<dbReference type="GO" id="GO:0055129">
    <property type="term" value="P:L-proline biosynthetic process"/>
    <property type="evidence" value="ECO:0007669"/>
    <property type="project" value="UniProtKB-UniRule"/>
</dbReference>
<dbReference type="CDD" id="cd04242">
    <property type="entry name" value="AAK_G5K_ProB"/>
    <property type="match status" value="1"/>
</dbReference>
<dbReference type="FunFam" id="3.40.1160.10:FF:000018">
    <property type="entry name" value="Glutamate 5-kinase"/>
    <property type="match status" value="1"/>
</dbReference>
<dbReference type="Gene3D" id="3.40.1160.10">
    <property type="entry name" value="Acetylglutamate kinase-like"/>
    <property type="match status" value="1"/>
</dbReference>
<dbReference type="HAMAP" id="MF_00456">
    <property type="entry name" value="ProB"/>
    <property type="match status" value="1"/>
</dbReference>
<dbReference type="InterPro" id="IPR036393">
    <property type="entry name" value="AceGlu_kinase-like_sf"/>
</dbReference>
<dbReference type="InterPro" id="IPR001048">
    <property type="entry name" value="Asp/Glu/Uridylate_kinase"/>
</dbReference>
<dbReference type="InterPro" id="IPR041739">
    <property type="entry name" value="G5K_ProB"/>
</dbReference>
<dbReference type="InterPro" id="IPR001057">
    <property type="entry name" value="Glu/AcGlu_kinase"/>
</dbReference>
<dbReference type="InterPro" id="IPR011529">
    <property type="entry name" value="Glu_5kinase"/>
</dbReference>
<dbReference type="InterPro" id="IPR005715">
    <property type="entry name" value="Glu_5kinase/COase_Synthase"/>
</dbReference>
<dbReference type="NCBIfam" id="TIGR01027">
    <property type="entry name" value="proB"/>
    <property type="match status" value="1"/>
</dbReference>
<dbReference type="PANTHER" id="PTHR43654">
    <property type="entry name" value="GLUTAMATE 5-KINASE"/>
    <property type="match status" value="1"/>
</dbReference>
<dbReference type="PANTHER" id="PTHR43654:SF1">
    <property type="entry name" value="ISOPENTENYL PHOSPHATE KINASE"/>
    <property type="match status" value="1"/>
</dbReference>
<dbReference type="Pfam" id="PF00696">
    <property type="entry name" value="AA_kinase"/>
    <property type="match status" value="1"/>
</dbReference>
<dbReference type="PIRSF" id="PIRSF000729">
    <property type="entry name" value="GK"/>
    <property type="match status" value="1"/>
</dbReference>
<dbReference type="PRINTS" id="PR00474">
    <property type="entry name" value="GLU5KINASE"/>
</dbReference>
<dbReference type="SUPFAM" id="SSF53633">
    <property type="entry name" value="Carbamate kinase-like"/>
    <property type="match status" value="1"/>
</dbReference>
<name>PROB_LIGS1</name>
<proteinExistence type="inferred from homology"/>
<sequence length="267" mass="29162">MENRNLQDAKRIVVKVGTSSLIRANGKINLQAIDELCYTLSGLVNEDKEVVLVSSGAVGVGLANMGLVQRPKQIPEQQALAAIGQSQLMTIYQQRFAMYSQKTSQILLTHDVLTYPESRENVLNTFNELLKWKVIPVVNENDTVAVDEMDHQTSFGDNDWLSAVVASGIDADLLIVLSDIDGLFNKNPKKYADANLISEVTEINEKITGAAGGTGSRFGTGGMATKIKAMDRMINEGRKAVLANGKRPSIIFEILNGKQIGTLFHKK</sequence>
<accession>Q1WRR5</accession>
<keyword id="KW-0028">Amino-acid biosynthesis</keyword>
<keyword id="KW-0067">ATP-binding</keyword>
<keyword id="KW-0963">Cytoplasm</keyword>
<keyword id="KW-0418">Kinase</keyword>
<keyword id="KW-0547">Nucleotide-binding</keyword>
<keyword id="KW-0641">Proline biosynthesis</keyword>
<keyword id="KW-1185">Reference proteome</keyword>
<keyword id="KW-0808">Transferase</keyword>